<accession>A1KRZ9</accession>
<proteinExistence type="inferred from homology"/>
<sequence>MNFLLSKLLLGLIRFYQYCISPLIPPRCRYTPTCSQYAVEAVKKYGAFKGGRLAIKRIARCHPLGGHGHDPVP</sequence>
<reference key="1">
    <citation type="journal article" date="2007" name="PLoS Genet.">
        <title>Meningococcal genetic variation mechanisms viewed through comparative analysis of serogroup C strain FAM18.</title>
        <authorList>
            <person name="Bentley S.D."/>
            <person name="Vernikos G.S."/>
            <person name="Snyder L.A.S."/>
            <person name="Churcher C."/>
            <person name="Arrowsmith C."/>
            <person name="Chillingworth T."/>
            <person name="Cronin A."/>
            <person name="Davis P.H."/>
            <person name="Holroyd N.E."/>
            <person name="Jagels K."/>
            <person name="Maddison M."/>
            <person name="Moule S."/>
            <person name="Rabbinowitsch E."/>
            <person name="Sharp S."/>
            <person name="Unwin L."/>
            <person name="Whitehead S."/>
            <person name="Quail M.A."/>
            <person name="Achtman M."/>
            <person name="Barrell B.G."/>
            <person name="Saunders N.J."/>
            <person name="Parkhill J."/>
        </authorList>
    </citation>
    <scope>NUCLEOTIDE SEQUENCE [LARGE SCALE GENOMIC DNA]</scope>
    <source>
        <strain>ATCC 700532 / DSM 15464 / FAM18</strain>
    </source>
</reference>
<name>YIDD_NEIMF</name>
<gene>
    <name type="ordered locus">NMC0317</name>
</gene>
<comment type="function">
    <text evidence="1">Could be involved in insertion of integral membrane proteins into the membrane.</text>
</comment>
<comment type="subcellular location">
    <subcellularLocation>
        <location evidence="1">Cell inner membrane</location>
        <topology evidence="1">Peripheral membrane protein</topology>
        <orientation evidence="1">Cytoplasmic side</orientation>
    </subcellularLocation>
</comment>
<comment type="similarity">
    <text evidence="1">Belongs to the UPF0161 family.</text>
</comment>
<keyword id="KW-0997">Cell inner membrane</keyword>
<keyword id="KW-1003">Cell membrane</keyword>
<keyword id="KW-0472">Membrane</keyword>
<organism>
    <name type="scientific">Neisseria meningitidis serogroup C / serotype 2a (strain ATCC 700532 / DSM 15464 / FAM18)</name>
    <dbReference type="NCBI Taxonomy" id="272831"/>
    <lineage>
        <taxon>Bacteria</taxon>
        <taxon>Pseudomonadati</taxon>
        <taxon>Pseudomonadota</taxon>
        <taxon>Betaproteobacteria</taxon>
        <taxon>Neisseriales</taxon>
        <taxon>Neisseriaceae</taxon>
        <taxon>Neisseria</taxon>
    </lineage>
</organism>
<evidence type="ECO:0000255" key="1">
    <source>
        <dbReference type="HAMAP-Rule" id="MF_00386"/>
    </source>
</evidence>
<protein>
    <recommendedName>
        <fullName evidence="1">Putative membrane protein insertion efficiency factor</fullName>
    </recommendedName>
</protein>
<dbReference type="EMBL" id="AM421808">
    <property type="protein sequence ID" value="CAM09628.1"/>
    <property type="molecule type" value="Genomic_DNA"/>
</dbReference>
<dbReference type="KEGG" id="nmc:NMC0317"/>
<dbReference type="HOGENOM" id="CLU_144811_6_1_4"/>
<dbReference type="Proteomes" id="UP000002286">
    <property type="component" value="Chromosome"/>
</dbReference>
<dbReference type="GO" id="GO:0005886">
    <property type="term" value="C:plasma membrane"/>
    <property type="evidence" value="ECO:0007669"/>
    <property type="project" value="UniProtKB-SubCell"/>
</dbReference>
<dbReference type="HAMAP" id="MF_00386">
    <property type="entry name" value="UPF0161_YidD"/>
    <property type="match status" value="1"/>
</dbReference>
<dbReference type="InterPro" id="IPR002696">
    <property type="entry name" value="Membr_insert_effic_factor_YidD"/>
</dbReference>
<dbReference type="NCBIfam" id="TIGR00278">
    <property type="entry name" value="membrane protein insertion efficiency factor YidD"/>
    <property type="match status" value="1"/>
</dbReference>
<dbReference type="PANTHER" id="PTHR33383">
    <property type="entry name" value="MEMBRANE PROTEIN INSERTION EFFICIENCY FACTOR-RELATED"/>
    <property type="match status" value="1"/>
</dbReference>
<dbReference type="PANTHER" id="PTHR33383:SF1">
    <property type="entry name" value="MEMBRANE PROTEIN INSERTION EFFICIENCY FACTOR-RELATED"/>
    <property type="match status" value="1"/>
</dbReference>
<dbReference type="Pfam" id="PF01809">
    <property type="entry name" value="YidD"/>
    <property type="match status" value="1"/>
</dbReference>
<dbReference type="SMART" id="SM01234">
    <property type="entry name" value="Haemolytic"/>
    <property type="match status" value="1"/>
</dbReference>
<feature type="chain" id="PRO_1000013104" description="Putative membrane protein insertion efficiency factor">
    <location>
        <begin position="1"/>
        <end position="73"/>
    </location>
</feature>